<comment type="function">
    <text evidence="3 5 9">Regulator of liver fat metabolism influencing triglyceride secretion and hepatic lipid droplet content (PubMed:24531328, PubMed:24927523). May function as sterol isomerase (PubMed:25566323).</text>
</comment>
<comment type="interaction">
    <interactant intactId="EBI-13082040">
        <id>Q9BZW4</id>
    </interactant>
    <interactant intactId="EBI-11343438">
        <id>Q3SXY8</id>
        <label>ARL13B</label>
    </interactant>
    <organismsDiffer>false</organismsDiffer>
    <experiments>3</experiments>
</comment>
<comment type="interaction">
    <interactant intactId="EBI-13082040">
        <id>Q9BZW4</id>
    </interactant>
    <interactant intactId="EBI-747430">
        <id>Q9BXK5</id>
        <label>BCL2L13</label>
    </interactant>
    <organismsDiffer>false</organismsDiffer>
    <experiments>3</experiments>
</comment>
<comment type="interaction">
    <interactant intactId="EBI-13082040">
        <id>Q9BZW4</id>
    </interactant>
    <interactant intactId="EBI-18304435">
        <id>Q5JX71</id>
        <label>FAM209A</label>
    </interactant>
    <organismsDiffer>false</organismsDiffer>
    <experiments>3</experiments>
</comment>
<comment type="interaction">
    <interactant intactId="EBI-13082040">
        <id>Q9BZW4</id>
    </interactant>
    <interactant intactId="EBI-11427100">
        <id>P31937</id>
        <label>HIBADH</label>
    </interactant>
    <organismsDiffer>false</organismsDiffer>
    <experiments>3</experiments>
</comment>
<comment type="interaction">
    <interactant intactId="EBI-13082040">
        <id>Q9BZW4</id>
    </interactant>
    <interactant intactId="EBI-12017638">
        <id>P48051</id>
        <label>KCNJ6</label>
    </interactant>
    <organismsDiffer>false</organismsDiffer>
    <experiments>3</experiments>
</comment>
<comment type="interaction">
    <interactant intactId="EBI-13082040">
        <id>Q9BZW4</id>
    </interactant>
    <interactant intactId="EBI-17263240">
        <id>P15941-11</id>
        <label>MUC1</label>
    </interactant>
    <organismsDiffer>false</organismsDiffer>
    <experiments>3</experiments>
</comment>
<comment type="interaction">
    <interactant intactId="EBI-13082040">
        <id>Q9BZW4</id>
    </interactant>
    <interactant intactId="EBI-3919694">
        <id>P15151</id>
        <label>PVR</label>
    </interactant>
    <organismsDiffer>false</organismsDiffer>
    <experiments>3</experiments>
</comment>
<comment type="interaction">
    <interactant intactId="EBI-13082040">
        <id>Q9BZW4</id>
    </interactant>
    <interactant intactId="EBI-17247926">
        <id>Q9NY72</id>
        <label>SCN3B</label>
    </interactant>
    <organismsDiffer>false</organismsDiffer>
    <experiments>3</experiments>
</comment>
<comment type="interaction">
    <interactant intactId="EBI-13082040">
        <id>Q9BZW4</id>
    </interactant>
    <interactant intactId="EBI-17280858">
        <id>Q8WWF3</id>
        <label>SSMEM1</label>
    </interactant>
    <organismsDiffer>false</organismsDiffer>
    <experiments>3</experiments>
</comment>
<comment type="interaction">
    <interactant intactId="EBI-13082040">
        <id>Q9BZW4</id>
    </interactant>
    <interactant intactId="EBI-13082040">
        <id>Q9BZW4</id>
        <label>TM6SF2</label>
    </interactant>
    <organismsDiffer>false</organismsDiffer>
    <experiments>3</experiments>
</comment>
<comment type="interaction">
    <interactant intactId="EBI-13082040">
        <id>Q9BZW4</id>
    </interactant>
    <interactant intactId="EBI-10982110">
        <id>Q96Q45-2</id>
        <label>TMEM237</label>
    </interactant>
    <organismsDiffer>false</organismsDiffer>
    <experiments>3</experiments>
</comment>
<comment type="subcellular location">
    <subcellularLocation>
        <location evidence="7">Endoplasmic reticulum membrane</location>
        <topology evidence="1">Multi-pass membrane protein</topology>
    </subcellularLocation>
    <subcellularLocation>
        <location evidence="7">Endoplasmic reticulum-Golgi intermediate compartment membrane</location>
        <topology evidence="1">Multi-pass membrane protein</topology>
    </subcellularLocation>
</comment>
<comment type="alternative products">
    <event type="alternative splicing"/>
    <isoform>
        <id>Q9BZW4-1</id>
        <name>1</name>
        <sequence type="displayed"/>
    </isoform>
    <isoform>
        <id>Q9BZW4-2</id>
        <name>2</name>
        <sequence type="described" ref="VSP_040282"/>
    </isoform>
</comment>
<comment type="tissue specificity">
    <text evidence="7">Substantial expression in liver and intestine, whereas all other tissues analyzed show low levels.</text>
</comment>
<comment type="similarity">
    <text evidence="10">Belongs to the TM6SF family.</text>
</comment>
<protein>
    <recommendedName>
        <fullName>Transmembrane 6 superfamily member 2</fullName>
    </recommendedName>
</protein>
<reference key="1">
    <citation type="journal article" date="2004" name="Nature">
        <title>The DNA sequence and biology of human chromosome 19.</title>
        <authorList>
            <person name="Grimwood J."/>
            <person name="Gordon L.A."/>
            <person name="Olsen A.S."/>
            <person name="Terry A."/>
            <person name="Schmutz J."/>
            <person name="Lamerdin J.E."/>
            <person name="Hellsten U."/>
            <person name="Goodstein D."/>
            <person name="Couronne O."/>
            <person name="Tran-Gyamfi M."/>
            <person name="Aerts A."/>
            <person name="Altherr M."/>
            <person name="Ashworth L."/>
            <person name="Bajorek E."/>
            <person name="Black S."/>
            <person name="Branscomb E."/>
            <person name="Caenepeel S."/>
            <person name="Carrano A.V."/>
            <person name="Caoile C."/>
            <person name="Chan Y.M."/>
            <person name="Christensen M."/>
            <person name="Cleland C.A."/>
            <person name="Copeland A."/>
            <person name="Dalin E."/>
            <person name="Dehal P."/>
            <person name="Denys M."/>
            <person name="Detter J.C."/>
            <person name="Escobar J."/>
            <person name="Flowers D."/>
            <person name="Fotopulos D."/>
            <person name="Garcia C."/>
            <person name="Georgescu A.M."/>
            <person name="Glavina T."/>
            <person name="Gomez M."/>
            <person name="Gonzales E."/>
            <person name="Groza M."/>
            <person name="Hammon N."/>
            <person name="Hawkins T."/>
            <person name="Haydu L."/>
            <person name="Ho I."/>
            <person name="Huang W."/>
            <person name="Israni S."/>
            <person name="Jett J."/>
            <person name="Kadner K."/>
            <person name="Kimball H."/>
            <person name="Kobayashi A."/>
            <person name="Larionov V."/>
            <person name="Leem S.-H."/>
            <person name="Lopez F."/>
            <person name="Lou Y."/>
            <person name="Lowry S."/>
            <person name="Malfatti S."/>
            <person name="Martinez D."/>
            <person name="McCready P.M."/>
            <person name="Medina C."/>
            <person name="Morgan J."/>
            <person name="Nelson K."/>
            <person name="Nolan M."/>
            <person name="Ovcharenko I."/>
            <person name="Pitluck S."/>
            <person name="Pollard M."/>
            <person name="Popkie A.P."/>
            <person name="Predki P."/>
            <person name="Quan G."/>
            <person name="Ramirez L."/>
            <person name="Rash S."/>
            <person name="Retterer J."/>
            <person name="Rodriguez A."/>
            <person name="Rogers S."/>
            <person name="Salamov A."/>
            <person name="Salazar A."/>
            <person name="She X."/>
            <person name="Smith D."/>
            <person name="Slezak T."/>
            <person name="Solovyev V."/>
            <person name="Thayer N."/>
            <person name="Tice H."/>
            <person name="Tsai M."/>
            <person name="Ustaszewska A."/>
            <person name="Vo N."/>
            <person name="Wagner M."/>
            <person name="Wheeler J."/>
            <person name="Wu K."/>
            <person name="Xie G."/>
            <person name="Yang J."/>
            <person name="Dubchak I."/>
            <person name="Furey T.S."/>
            <person name="DeJong P."/>
            <person name="Dickson M."/>
            <person name="Gordon D."/>
            <person name="Eichler E.E."/>
            <person name="Pennacchio L.A."/>
            <person name="Richardson P."/>
            <person name="Stubbs L."/>
            <person name="Rokhsar D.S."/>
            <person name="Myers R.M."/>
            <person name="Rubin E.M."/>
            <person name="Lucas S.M."/>
        </authorList>
    </citation>
    <scope>NUCLEOTIDE SEQUENCE [LARGE SCALE GENOMIC DNA]</scope>
</reference>
<reference key="2">
    <citation type="journal article" date="2000" name="Cytogenet. Cell Genet.">
        <title>Cloning of the novel gene TM6SF1 reveals conservation of clusters of paralogous genes between human chromosomes 15q24-q26 and 19p13.3-p12.</title>
        <authorList>
            <person name="Carim-Todd L."/>
            <person name="Escarceller M."/>
            <person name="Estivill X."/>
            <person name="Sumoy L."/>
        </authorList>
    </citation>
    <scope>NUCLEOTIDE SEQUENCE [MRNA] OF 2-377 (ISOFORM 2)</scope>
</reference>
<reference key="3">
    <citation type="journal article" date="2004" name="Genome Res.">
        <title>The status, quality, and expansion of the NIH full-length cDNA project: the Mammalian Gene Collection (MGC).</title>
        <authorList>
            <consortium name="The MGC Project Team"/>
        </authorList>
    </citation>
    <scope>PARTIAL NUCLEOTIDE SEQUENCE [LARGE SCALE MRNA] (ISOFORM 1)</scope>
</reference>
<reference key="4">
    <citation type="journal article" date="2014" name="Front. Genet.">
        <title>TM6SF2 and MAC30, new enzyme homologs in sterol metabolism and common metabolic disease.</title>
        <authorList>
            <person name="Sanchez-Pulido L."/>
            <person name="Ponting C.P."/>
        </authorList>
    </citation>
    <scope>POSSIBLE FUNCTION AS STEROL ISOMERASE</scope>
    <scope>IDENTIFICATION OF EXPERA DOMAIN</scope>
</reference>
<reference key="5">
    <citation type="journal article" date="2014" name="Nat. Genet.">
        <title>Systematic evaluation of coding variation identifies a candidate causal variant in TM6SF2 influencing total cholesterol and myocardial infarction risk.</title>
        <authorList>
            <person name="Holmen O.L."/>
            <person name="Zhang H."/>
            <person name="Fan Y."/>
            <person name="Hovelson D.H."/>
            <person name="Schmidt E.M."/>
            <person name="Zhou W."/>
            <person name="Guo Y."/>
            <person name="Zhang J."/>
            <person name="Langhammer A."/>
            <person name="Lochen M.L."/>
            <person name="Ganesh S.K."/>
            <person name="Vatten L."/>
            <person name="Skorpen F."/>
            <person name="Dalen H."/>
            <person name="Zhang J."/>
            <person name="Pennathur S."/>
            <person name="Chen J."/>
            <person name="Platou C."/>
            <person name="Mathiesen E.B."/>
            <person name="Wilsgaard T."/>
            <person name="Njolstad I."/>
            <person name="Boehnke M."/>
            <person name="Chen Y.E."/>
            <person name="Abecasis G.R."/>
            <person name="Hveem K."/>
            <person name="Willer C.J."/>
        </authorList>
    </citation>
    <scope>VARIANT LYS-167</scope>
</reference>
<reference key="6">
    <citation type="journal article" date="2014" name="Nat. Genet.">
        <title>Exome-wide association study identifies a TM6SF2 variant that confers susceptibility to nonalcoholic fatty liver disease.</title>
        <authorList>
            <person name="Kozlitina J."/>
            <person name="Smagris E."/>
            <person name="Stender S."/>
            <person name="Nordestgaard B.G."/>
            <person name="Zhou H.H."/>
            <person name="Tybjaerg-Hansen A."/>
            <person name="Vogt T.F."/>
            <person name="Hobbs H.H."/>
            <person name="Cohen J.C."/>
        </authorList>
    </citation>
    <scope>VARIANT LYS-167</scope>
    <scope>CHARACTERIZATION OF VARIANT LYS-167</scope>
    <scope>TISSUE SPECIFICITY</scope>
    <scope>FUNCTION</scope>
</reference>
<reference key="7">
    <citation type="journal article" date="2014" name="Nat. Commun.">
        <title>TM6SF2 rs58542926 influences hepatic fibrosis progression in patients with non-alcoholic fatty liver disease.</title>
        <authorList>
            <person name="Liu Y.L."/>
            <person name="Reeves H.L."/>
            <person name="Burt A.D."/>
            <person name="Tiniakos D."/>
            <person name="McPherson S."/>
            <person name="Leathart J.B."/>
            <person name="Allison M.E."/>
            <person name="Alexander G.J."/>
            <person name="Piguet A.C."/>
            <person name="Anty R."/>
            <person name="Donaldson P."/>
            <person name="Aithal G.P."/>
            <person name="Francque S."/>
            <person name="Van Gaal L."/>
            <person name="Clement K."/>
            <person name="Ratziu V."/>
            <person name="Dufour J.F."/>
            <person name="Day C.P."/>
            <person name="Daly A.K."/>
            <person name="Anstee Q.M."/>
        </authorList>
    </citation>
    <scope>VARIANT LYS-167</scope>
</reference>
<reference key="8">
    <citation type="journal article" date="2014" name="Proc. Natl. Acad. Sci. U.S.A.">
        <title>TM6SF2 is a regulator of liver fat metabolism influencing triglyceride secretion and hepatic lipid droplet content.</title>
        <authorList>
            <person name="Mahdessian H."/>
            <person name="Taxiarchis A."/>
            <person name="Popov S."/>
            <person name="Silveira A."/>
            <person name="Franco-Cereceda A."/>
            <person name="Hamsten A."/>
            <person name="Eriksson P."/>
            <person name="van't Hooft F."/>
        </authorList>
    </citation>
    <scope>TISSUE SPECIFICITY</scope>
    <scope>SUBCELLULAR LOCATION</scope>
    <scope>FUNCTION</scope>
</reference>
<accession>Q9BZW4</accession>
<accession>Q0IJ64</accession>
<proteinExistence type="evidence at protein level"/>
<name>TM6S2_HUMAN</name>
<gene>
    <name type="primary">TM6SF2</name>
</gene>
<sequence>MDIPPLAGKIAALSLSALPVSYALNHVSALSHPLWVALMSALILGLLFVAVYSLSHGEVSYDPLYAVFAVFAFTSVVDLIIALQEDSYVVGFMEFYTKEGEPYLRTAHGVFICYWDGTVHYLLYLAMAGAICRRKRYRNFGLYWLGSFAMSILVFLTGNILGKYSSEIRPAFFLTIPYLLVPCWAGMKVFSQPRALTRCTANMVQEEQRKGLLQRPADLALVIYLILAGFFTLFRGLVVLDCPTDACFVYIYQYEPYLRDPVAYPKVQMLMYMFYVLPFCGLAAYALTFPGCSWLPDWALVFAGGIGQAQFSHMGASMHLRTPFTYRVPEDTWGCFFVCNLLYALGPHLLAYRCLQWPAFFHQPPPSDPLALHKKQH</sequence>
<organism>
    <name type="scientific">Homo sapiens</name>
    <name type="common">Human</name>
    <dbReference type="NCBI Taxonomy" id="9606"/>
    <lineage>
        <taxon>Eukaryota</taxon>
        <taxon>Metazoa</taxon>
        <taxon>Chordata</taxon>
        <taxon>Craniata</taxon>
        <taxon>Vertebrata</taxon>
        <taxon>Euteleostomi</taxon>
        <taxon>Mammalia</taxon>
        <taxon>Eutheria</taxon>
        <taxon>Euarchontoglires</taxon>
        <taxon>Primates</taxon>
        <taxon>Haplorrhini</taxon>
        <taxon>Catarrhini</taxon>
        <taxon>Hominidae</taxon>
        <taxon>Homo</taxon>
    </lineage>
</organism>
<evidence type="ECO:0000255" key="1"/>
<evidence type="ECO:0000255" key="2">
    <source>
        <dbReference type="PROSITE-ProRule" id="PRU01087"/>
    </source>
</evidence>
<evidence type="ECO:0000269" key="3">
    <source>
    </source>
</evidence>
<evidence type="ECO:0000269" key="4">
    <source>
    </source>
</evidence>
<evidence type="ECO:0000269" key="5">
    <source>
    </source>
</evidence>
<evidence type="ECO:0000269" key="6">
    <source>
    </source>
</evidence>
<evidence type="ECO:0000269" key="7">
    <source>
    </source>
</evidence>
<evidence type="ECO:0000303" key="8">
    <source>
    </source>
</evidence>
<evidence type="ECO:0000303" key="9">
    <source>
    </source>
</evidence>
<evidence type="ECO:0000305" key="10"/>
<dbReference type="EMBL" id="AC003967">
    <property type="status" value="NOT_ANNOTATED_CDS"/>
    <property type="molecule type" value="Genomic_DNA"/>
</dbReference>
<dbReference type="EMBL" id="AC138430">
    <property type="status" value="NOT_ANNOTATED_CDS"/>
    <property type="molecule type" value="Genomic_DNA"/>
</dbReference>
<dbReference type="EMBL" id="AF255923">
    <property type="protein sequence ID" value="AAG59700.1"/>
    <property type="molecule type" value="mRNA"/>
</dbReference>
<dbReference type="EMBL" id="BC120986">
    <property type="protein sequence ID" value="AAI20987.1"/>
    <property type="molecule type" value="mRNA"/>
</dbReference>
<dbReference type="EMBL" id="BC120987">
    <property type="protein sequence ID" value="AAI20988.1"/>
    <property type="molecule type" value="mRNA"/>
</dbReference>
<dbReference type="CCDS" id="CCDS42528.1">
    <molecule id="Q9BZW4-1"/>
</dbReference>
<dbReference type="RefSeq" id="NP_001001524.2">
    <molecule id="Q9BZW4-1"/>
    <property type="nucleotide sequence ID" value="NM_001001524.3"/>
</dbReference>
<dbReference type="BioGRID" id="119746">
    <property type="interactions" value="12"/>
</dbReference>
<dbReference type="FunCoup" id="Q9BZW4">
    <property type="interactions" value="52"/>
</dbReference>
<dbReference type="IntAct" id="Q9BZW4">
    <property type="interactions" value="11"/>
</dbReference>
<dbReference type="STRING" id="9606.ENSP00000374014"/>
<dbReference type="TCDB" id="8.A.93.2.1">
    <property type="family name" value="the sigma2 receptor or tmem97 (s2r) family"/>
</dbReference>
<dbReference type="BioMuta" id="TM6SF2"/>
<dbReference type="DMDM" id="313104274"/>
<dbReference type="MassIVE" id="Q9BZW4"/>
<dbReference type="PaxDb" id="9606-ENSP00000374014"/>
<dbReference type="PeptideAtlas" id="Q9BZW4"/>
<dbReference type="Antibodypedia" id="67508">
    <property type="antibodies" value="62 antibodies from 14 providers"/>
</dbReference>
<dbReference type="DNASU" id="53345"/>
<dbReference type="Ensembl" id="ENST00000389363.5">
    <molecule id="Q9BZW4-1"/>
    <property type="protein sequence ID" value="ENSP00000374014.2"/>
    <property type="gene ID" value="ENSG00000213996.13"/>
</dbReference>
<dbReference type="GeneID" id="53345"/>
<dbReference type="KEGG" id="hsa:53345"/>
<dbReference type="MANE-Select" id="ENST00000389363.5">
    <property type="protein sequence ID" value="ENSP00000374014.2"/>
    <property type="RefSeq nucleotide sequence ID" value="NM_001001524.3"/>
    <property type="RefSeq protein sequence ID" value="NP_001001524.2"/>
</dbReference>
<dbReference type="UCSC" id="uc002nmd.2">
    <molecule id="Q9BZW4-1"/>
    <property type="organism name" value="human"/>
</dbReference>
<dbReference type="AGR" id="HGNC:11861"/>
<dbReference type="CTD" id="53345"/>
<dbReference type="DisGeNET" id="53345"/>
<dbReference type="GeneCards" id="TM6SF2"/>
<dbReference type="HGNC" id="HGNC:11861">
    <property type="gene designation" value="TM6SF2"/>
</dbReference>
<dbReference type="HPA" id="ENSG00000213996">
    <property type="expression patterns" value="Group enriched (intestine, liver)"/>
</dbReference>
<dbReference type="MalaCards" id="TM6SF2"/>
<dbReference type="MIM" id="606563">
    <property type="type" value="gene"/>
</dbReference>
<dbReference type="neXtProt" id="NX_Q9BZW4"/>
<dbReference type="OpenTargets" id="ENSG00000213996"/>
<dbReference type="PharmGKB" id="PA36562"/>
<dbReference type="VEuPathDB" id="HostDB:ENSG00000213996"/>
<dbReference type="eggNOG" id="ENOG502QRB2">
    <property type="taxonomic scope" value="Eukaryota"/>
</dbReference>
<dbReference type="GeneTree" id="ENSGT00390000012913"/>
<dbReference type="HOGENOM" id="CLU_046717_0_0_1"/>
<dbReference type="InParanoid" id="Q9BZW4"/>
<dbReference type="OMA" id="VQMLMYM"/>
<dbReference type="OrthoDB" id="8181520at2759"/>
<dbReference type="PAN-GO" id="Q9BZW4">
    <property type="GO annotations" value="4 GO annotations based on evolutionary models"/>
</dbReference>
<dbReference type="PhylomeDB" id="Q9BZW4"/>
<dbReference type="TreeFam" id="TF333088"/>
<dbReference type="PathwayCommons" id="Q9BZW4"/>
<dbReference type="SignaLink" id="Q9BZW4"/>
<dbReference type="BioGRID-ORCS" id="53345">
    <property type="hits" value="21 hits in 1138 CRISPR screens"/>
</dbReference>
<dbReference type="GenomeRNAi" id="53345"/>
<dbReference type="Pharos" id="Q9BZW4">
    <property type="development level" value="Tbio"/>
</dbReference>
<dbReference type="PRO" id="PR:Q9BZW4"/>
<dbReference type="Proteomes" id="UP000005640">
    <property type="component" value="Chromosome 19"/>
</dbReference>
<dbReference type="RNAct" id="Q9BZW4">
    <property type="molecule type" value="protein"/>
</dbReference>
<dbReference type="Bgee" id="ENSG00000213996">
    <property type="expression patterns" value="Expressed in ileal mucosa and 107 other cell types or tissues"/>
</dbReference>
<dbReference type="GO" id="GO:0005789">
    <property type="term" value="C:endoplasmic reticulum membrane"/>
    <property type="evidence" value="ECO:0000314"/>
    <property type="project" value="UniProtKB"/>
</dbReference>
<dbReference type="GO" id="GO:0033116">
    <property type="term" value="C:endoplasmic reticulum-Golgi intermediate compartment membrane"/>
    <property type="evidence" value="ECO:0000314"/>
    <property type="project" value="UniProtKB"/>
</dbReference>
<dbReference type="GO" id="GO:0042802">
    <property type="term" value="F:identical protein binding"/>
    <property type="evidence" value="ECO:0000353"/>
    <property type="project" value="IntAct"/>
</dbReference>
<dbReference type="GO" id="GO:0055088">
    <property type="term" value="P:lipid homeostasis"/>
    <property type="evidence" value="ECO:0000318"/>
    <property type="project" value="GO_Central"/>
</dbReference>
<dbReference type="GO" id="GO:0006629">
    <property type="term" value="P:lipid metabolic process"/>
    <property type="evidence" value="ECO:0007669"/>
    <property type="project" value="UniProtKB-KW"/>
</dbReference>
<dbReference type="GO" id="GO:0019216">
    <property type="term" value="P:regulation of lipid metabolic process"/>
    <property type="evidence" value="ECO:0000314"/>
    <property type="project" value="UniProtKB"/>
</dbReference>
<dbReference type="CDD" id="cd21106">
    <property type="entry name" value="TM6SF1-like"/>
    <property type="match status" value="1"/>
</dbReference>
<dbReference type="InterPro" id="IPR033118">
    <property type="entry name" value="EXPERA"/>
</dbReference>
<dbReference type="InterPro" id="IPR047195">
    <property type="entry name" value="TM6SF1-like"/>
</dbReference>
<dbReference type="PANTHER" id="PTHR14568:SF9">
    <property type="entry name" value="TRANSMEMBRANE 6 SUPERFAMILY MEMBER 2"/>
    <property type="match status" value="1"/>
</dbReference>
<dbReference type="PANTHER" id="PTHR14568">
    <property type="entry name" value="TRANSMEMBRANE SUPERFAMILY 6 MEMBER 1/2"/>
    <property type="match status" value="1"/>
</dbReference>
<dbReference type="Pfam" id="PF05241">
    <property type="entry name" value="EBP"/>
    <property type="match status" value="1"/>
</dbReference>
<dbReference type="PROSITE" id="PS51751">
    <property type="entry name" value="EXPERA"/>
    <property type="match status" value="2"/>
</dbReference>
<keyword id="KW-0025">Alternative splicing</keyword>
<keyword id="KW-0256">Endoplasmic reticulum</keyword>
<keyword id="KW-0443">Lipid metabolism</keyword>
<keyword id="KW-0472">Membrane</keyword>
<keyword id="KW-1267">Proteomics identification</keyword>
<keyword id="KW-1185">Reference proteome</keyword>
<keyword id="KW-0677">Repeat</keyword>
<keyword id="KW-0812">Transmembrane</keyword>
<keyword id="KW-1133">Transmembrane helix</keyword>
<feature type="chain" id="PRO_0000181835" description="Transmembrane 6 superfamily member 2">
    <location>
        <begin position="1"/>
        <end position="377"/>
    </location>
</feature>
<feature type="transmembrane region" description="Helical; Name=1" evidence="1">
    <location>
        <begin position="10"/>
        <end position="30"/>
    </location>
</feature>
<feature type="transmembrane region" description="Helical; Name=2" evidence="1">
    <location>
        <begin position="34"/>
        <end position="54"/>
    </location>
</feature>
<feature type="transmembrane region" description="Helical; Name=3" evidence="1">
    <location>
        <begin position="63"/>
        <end position="83"/>
    </location>
</feature>
<feature type="transmembrane region" description="Helical; Name=4" evidence="1">
    <location>
        <begin position="111"/>
        <end position="131"/>
    </location>
</feature>
<feature type="transmembrane region" description="Helical; Name=5" evidence="1">
    <location>
        <begin position="140"/>
        <end position="160"/>
    </location>
</feature>
<feature type="transmembrane region" description="Helical; Name=6" evidence="1">
    <location>
        <begin position="170"/>
        <end position="190"/>
    </location>
</feature>
<feature type="transmembrane region" description="Helical; Name=7" evidence="1">
    <location>
        <begin position="219"/>
        <end position="239"/>
    </location>
</feature>
<feature type="transmembrane region" description="Helical; Name=8" evidence="1">
    <location>
        <begin position="269"/>
        <end position="289"/>
    </location>
</feature>
<feature type="transmembrane region" description="Helical; Name=9" evidence="1">
    <location>
        <begin position="332"/>
        <end position="352"/>
    </location>
</feature>
<feature type="domain" description="EXPERA 1" evidence="2">
    <location>
        <begin position="61"/>
        <end position="186"/>
    </location>
</feature>
<feature type="domain" description="EXPERA 2" evidence="2">
    <location>
        <begin position="217"/>
        <end position="351"/>
    </location>
</feature>
<feature type="splice variant" id="VSP_040282" description="In isoform 2." evidence="8">
    <location>
        <begin position="327"/>
        <end position="353"/>
    </location>
</feature>
<feature type="sequence variant" id="VAR_062153" description="Associated with higher circulating levels of alanine transaminase with lower levels of low-density lipoprotein-cholesterol (LDL-C), triglycerides and alkaline phosphatase in 3 independent populations; reduces protein expression by 46%; dbSNP:rs58542926." evidence="3 4 6">
    <original>E</original>
    <variation>K</variation>
    <location>
        <position position="167"/>
    </location>
</feature>